<reference key="1">
    <citation type="journal article" date="2004" name="Nat. Genet.">
        <title>Comparison of genome degradation in Paratyphi A and Typhi, human-restricted serovars of Salmonella enterica that cause typhoid.</title>
        <authorList>
            <person name="McClelland M."/>
            <person name="Sanderson K.E."/>
            <person name="Clifton S.W."/>
            <person name="Latreille P."/>
            <person name="Porwollik S."/>
            <person name="Sabo A."/>
            <person name="Meyer R."/>
            <person name="Bieri T."/>
            <person name="Ozersky P."/>
            <person name="McLellan M."/>
            <person name="Harkins C.R."/>
            <person name="Wang C."/>
            <person name="Nguyen C."/>
            <person name="Berghoff A."/>
            <person name="Elliott G."/>
            <person name="Kohlberg S."/>
            <person name="Strong C."/>
            <person name="Du F."/>
            <person name="Carter J."/>
            <person name="Kremizki C."/>
            <person name="Layman D."/>
            <person name="Leonard S."/>
            <person name="Sun H."/>
            <person name="Fulton L."/>
            <person name="Nash W."/>
            <person name="Miner T."/>
            <person name="Minx P."/>
            <person name="Delehaunty K."/>
            <person name="Fronick C."/>
            <person name="Magrini V."/>
            <person name="Nhan M."/>
            <person name="Warren W."/>
            <person name="Florea L."/>
            <person name="Spieth J."/>
            <person name="Wilson R.K."/>
        </authorList>
    </citation>
    <scope>NUCLEOTIDE SEQUENCE [LARGE SCALE GENOMIC DNA]</scope>
    <source>
        <strain>ATCC 9150 / SARB42</strain>
    </source>
</reference>
<proteinExistence type="inferred from homology"/>
<protein>
    <recommendedName>
        <fullName evidence="1">3-isopropylmalate dehydratase large subunit</fullName>
        <ecNumber evidence="1">4.2.1.33</ecNumber>
    </recommendedName>
    <alternativeName>
        <fullName evidence="1">Alpha-IPM isomerase</fullName>
        <shortName evidence="1">IPMI</shortName>
    </alternativeName>
    <alternativeName>
        <fullName evidence="1">Isopropylmalate isomerase</fullName>
    </alternativeName>
</protein>
<keyword id="KW-0004">4Fe-4S</keyword>
<keyword id="KW-0028">Amino-acid biosynthesis</keyword>
<keyword id="KW-0100">Branched-chain amino acid biosynthesis</keyword>
<keyword id="KW-0408">Iron</keyword>
<keyword id="KW-0411">Iron-sulfur</keyword>
<keyword id="KW-0432">Leucine biosynthesis</keyword>
<keyword id="KW-0456">Lyase</keyword>
<keyword id="KW-0479">Metal-binding</keyword>
<name>LEUC_SALPA</name>
<sequence length="466" mass="49736">MAKTLYEKLFDAHVVFEAPNETPLLYIDRHLVHEVTSPQAFDGLRAHHRPVRQPGKTFATMDHNVSTQTKDINASGEMARIQMQELIKNCNEFGVELYDLNHPYQGIVHVMGPEQGVTLPGMTIVCGDSHTATHGAFGALAFGIGTSEVEHVLATQTLKQGRAKTMKIEVTGSAAPGITAKDIVLAIIGKTGSAGGTGHVVEFCGDAIRALSMEGRMTLCNMAIEMGAKAGLVAPDETTFNYVKGRLHAPKGCDFDEAVEYWKTLKTDDGATFDTVVTLRAEEIAPQVTWGTNPGQVISVTDIIPDPASFSDPVERASAEKALAYMGLQPGVPLTDVAIDKVFIGSCTNSRIEDLRAAAEVAKGRKVAPGVQALVVPGSGPVKAQAEAEGLDKIFIEAGFEWRLPGCSMCLAMNNDRLNPGERCASTSNRNFEGRQGRGGRTHLVSPAMAAAAAVTGHFADIRSIK</sequence>
<accession>Q5PDG3</accession>
<evidence type="ECO:0000255" key="1">
    <source>
        <dbReference type="HAMAP-Rule" id="MF_01026"/>
    </source>
</evidence>
<organism>
    <name type="scientific">Salmonella paratyphi A (strain ATCC 9150 / SARB42)</name>
    <dbReference type="NCBI Taxonomy" id="295319"/>
    <lineage>
        <taxon>Bacteria</taxon>
        <taxon>Pseudomonadati</taxon>
        <taxon>Pseudomonadota</taxon>
        <taxon>Gammaproteobacteria</taxon>
        <taxon>Enterobacterales</taxon>
        <taxon>Enterobacteriaceae</taxon>
        <taxon>Salmonella</taxon>
    </lineage>
</organism>
<dbReference type="EC" id="4.2.1.33" evidence="1"/>
<dbReference type="EMBL" id="CP000026">
    <property type="protein sequence ID" value="AAV76146.1"/>
    <property type="molecule type" value="Genomic_DNA"/>
</dbReference>
<dbReference type="RefSeq" id="WP_001140636.1">
    <property type="nucleotide sequence ID" value="NC_006511.1"/>
</dbReference>
<dbReference type="SMR" id="Q5PDG3"/>
<dbReference type="KEGG" id="spt:SPA0113"/>
<dbReference type="HOGENOM" id="CLU_006714_3_4_6"/>
<dbReference type="UniPathway" id="UPA00048">
    <property type="reaction ID" value="UER00071"/>
</dbReference>
<dbReference type="Proteomes" id="UP000008185">
    <property type="component" value="Chromosome"/>
</dbReference>
<dbReference type="GO" id="GO:0003861">
    <property type="term" value="F:3-isopropylmalate dehydratase activity"/>
    <property type="evidence" value="ECO:0007669"/>
    <property type="project" value="UniProtKB-UniRule"/>
</dbReference>
<dbReference type="GO" id="GO:0051539">
    <property type="term" value="F:4 iron, 4 sulfur cluster binding"/>
    <property type="evidence" value="ECO:0007669"/>
    <property type="project" value="UniProtKB-KW"/>
</dbReference>
<dbReference type="GO" id="GO:0046872">
    <property type="term" value="F:metal ion binding"/>
    <property type="evidence" value="ECO:0007669"/>
    <property type="project" value="UniProtKB-KW"/>
</dbReference>
<dbReference type="GO" id="GO:0009098">
    <property type="term" value="P:L-leucine biosynthetic process"/>
    <property type="evidence" value="ECO:0007669"/>
    <property type="project" value="UniProtKB-UniRule"/>
</dbReference>
<dbReference type="CDD" id="cd01583">
    <property type="entry name" value="IPMI"/>
    <property type="match status" value="1"/>
</dbReference>
<dbReference type="FunFam" id="3.30.499.10:FF:000006">
    <property type="entry name" value="3-isopropylmalate dehydratase large subunit"/>
    <property type="match status" value="1"/>
</dbReference>
<dbReference type="FunFam" id="3.30.499.10:FF:000007">
    <property type="entry name" value="3-isopropylmalate dehydratase large subunit"/>
    <property type="match status" value="1"/>
</dbReference>
<dbReference type="Gene3D" id="3.30.499.10">
    <property type="entry name" value="Aconitase, domain 3"/>
    <property type="match status" value="2"/>
</dbReference>
<dbReference type="HAMAP" id="MF_01026">
    <property type="entry name" value="LeuC_type1"/>
    <property type="match status" value="1"/>
</dbReference>
<dbReference type="InterPro" id="IPR004430">
    <property type="entry name" value="3-IsopropMal_deHydase_lsu"/>
</dbReference>
<dbReference type="InterPro" id="IPR015931">
    <property type="entry name" value="Acnase/IPM_dHydase_lsu_aba_1/3"/>
</dbReference>
<dbReference type="InterPro" id="IPR001030">
    <property type="entry name" value="Acoase/IPM_deHydtase_lsu_aba"/>
</dbReference>
<dbReference type="InterPro" id="IPR018136">
    <property type="entry name" value="Aconitase_4Fe-4S_BS"/>
</dbReference>
<dbReference type="InterPro" id="IPR036008">
    <property type="entry name" value="Aconitase_4Fe-4S_dom"/>
</dbReference>
<dbReference type="InterPro" id="IPR050067">
    <property type="entry name" value="IPM_dehydratase_rel_enz"/>
</dbReference>
<dbReference type="InterPro" id="IPR033941">
    <property type="entry name" value="IPMI_cat"/>
</dbReference>
<dbReference type="NCBIfam" id="TIGR00170">
    <property type="entry name" value="leuC"/>
    <property type="match status" value="1"/>
</dbReference>
<dbReference type="NCBIfam" id="NF004016">
    <property type="entry name" value="PRK05478.1"/>
    <property type="match status" value="1"/>
</dbReference>
<dbReference type="NCBIfam" id="NF009116">
    <property type="entry name" value="PRK12466.1"/>
    <property type="match status" value="1"/>
</dbReference>
<dbReference type="PANTHER" id="PTHR43822:SF9">
    <property type="entry name" value="3-ISOPROPYLMALATE DEHYDRATASE"/>
    <property type="match status" value="1"/>
</dbReference>
<dbReference type="PANTHER" id="PTHR43822">
    <property type="entry name" value="HOMOACONITASE, MITOCHONDRIAL-RELATED"/>
    <property type="match status" value="1"/>
</dbReference>
<dbReference type="Pfam" id="PF00330">
    <property type="entry name" value="Aconitase"/>
    <property type="match status" value="1"/>
</dbReference>
<dbReference type="PRINTS" id="PR00415">
    <property type="entry name" value="ACONITASE"/>
</dbReference>
<dbReference type="SUPFAM" id="SSF53732">
    <property type="entry name" value="Aconitase iron-sulfur domain"/>
    <property type="match status" value="1"/>
</dbReference>
<dbReference type="PROSITE" id="PS00450">
    <property type="entry name" value="ACONITASE_1"/>
    <property type="match status" value="1"/>
</dbReference>
<dbReference type="PROSITE" id="PS01244">
    <property type="entry name" value="ACONITASE_2"/>
    <property type="match status" value="1"/>
</dbReference>
<feature type="chain" id="PRO_0000076801" description="3-isopropylmalate dehydratase large subunit">
    <location>
        <begin position="1"/>
        <end position="466"/>
    </location>
</feature>
<feature type="binding site" evidence="1">
    <location>
        <position position="347"/>
    </location>
    <ligand>
        <name>[4Fe-4S] cluster</name>
        <dbReference type="ChEBI" id="CHEBI:49883"/>
    </ligand>
</feature>
<feature type="binding site" evidence="1">
    <location>
        <position position="407"/>
    </location>
    <ligand>
        <name>[4Fe-4S] cluster</name>
        <dbReference type="ChEBI" id="CHEBI:49883"/>
    </ligand>
</feature>
<feature type="binding site" evidence="1">
    <location>
        <position position="410"/>
    </location>
    <ligand>
        <name>[4Fe-4S] cluster</name>
        <dbReference type="ChEBI" id="CHEBI:49883"/>
    </ligand>
</feature>
<gene>
    <name evidence="1" type="primary">leuC</name>
    <name type="ordered locus">SPA0113</name>
</gene>
<comment type="function">
    <text evidence="1">Catalyzes the isomerization between 2-isopropylmalate and 3-isopropylmalate, via the formation of 2-isopropylmaleate.</text>
</comment>
<comment type="catalytic activity">
    <reaction evidence="1">
        <text>(2R,3S)-3-isopropylmalate = (2S)-2-isopropylmalate</text>
        <dbReference type="Rhea" id="RHEA:32287"/>
        <dbReference type="ChEBI" id="CHEBI:1178"/>
        <dbReference type="ChEBI" id="CHEBI:35121"/>
        <dbReference type="EC" id="4.2.1.33"/>
    </reaction>
</comment>
<comment type="cofactor">
    <cofactor evidence="1">
        <name>[4Fe-4S] cluster</name>
        <dbReference type="ChEBI" id="CHEBI:49883"/>
    </cofactor>
    <text evidence="1">Binds 1 [4Fe-4S] cluster per subunit.</text>
</comment>
<comment type="pathway">
    <text evidence="1">Amino-acid biosynthesis; L-leucine biosynthesis; L-leucine from 3-methyl-2-oxobutanoate: step 2/4.</text>
</comment>
<comment type="subunit">
    <text evidence="1">Heterodimer of LeuC and LeuD.</text>
</comment>
<comment type="similarity">
    <text evidence="1">Belongs to the aconitase/IPM isomerase family. LeuC type 1 subfamily.</text>
</comment>